<dbReference type="EMBL" id="CP000151">
    <property type="protein sequence ID" value="ABB07268.1"/>
    <property type="molecule type" value="Genomic_DNA"/>
</dbReference>
<dbReference type="RefSeq" id="WP_006476999.1">
    <property type="nucleotide sequence ID" value="NZ_WNDV01000019.1"/>
</dbReference>
<dbReference type="SMR" id="Q39JU8"/>
<dbReference type="GeneID" id="98106573"/>
<dbReference type="KEGG" id="bur:Bcep18194_A3667"/>
<dbReference type="HOGENOM" id="CLU_095424_4_1_4"/>
<dbReference type="Proteomes" id="UP000002705">
    <property type="component" value="Chromosome 1"/>
</dbReference>
<dbReference type="GO" id="GO:0022625">
    <property type="term" value="C:cytosolic large ribosomal subunit"/>
    <property type="evidence" value="ECO:0007669"/>
    <property type="project" value="TreeGrafter"/>
</dbReference>
<dbReference type="GO" id="GO:0003735">
    <property type="term" value="F:structural constituent of ribosome"/>
    <property type="evidence" value="ECO:0007669"/>
    <property type="project" value="InterPro"/>
</dbReference>
<dbReference type="GO" id="GO:0006412">
    <property type="term" value="P:translation"/>
    <property type="evidence" value="ECO:0007669"/>
    <property type="project" value="UniProtKB-UniRule"/>
</dbReference>
<dbReference type="FunFam" id="2.40.50.100:FF:000001">
    <property type="entry name" value="50S ribosomal protein L27"/>
    <property type="match status" value="1"/>
</dbReference>
<dbReference type="Gene3D" id="2.40.50.100">
    <property type="match status" value="1"/>
</dbReference>
<dbReference type="HAMAP" id="MF_00539">
    <property type="entry name" value="Ribosomal_bL27"/>
    <property type="match status" value="1"/>
</dbReference>
<dbReference type="InterPro" id="IPR001684">
    <property type="entry name" value="Ribosomal_bL27"/>
</dbReference>
<dbReference type="InterPro" id="IPR018261">
    <property type="entry name" value="Ribosomal_bL27_CS"/>
</dbReference>
<dbReference type="NCBIfam" id="TIGR00062">
    <property type="entry name" value="L27"/>
    <property type="match status" value="1"/>
</dbReference>
<dbReference type="PANTHER" id="PTHR15893:SF0">
    <property type="entry name" value="LARGE RIBOSOMAL SUBUNIT PROTEIN BL27M"/>
    <property type="match status" value="1"/>
</dbReference>
<dbReference type="PANTHER" id="PTHR15893">
    <property type="entry name" value="RIBOSOMAL PROTEIN L27"/>
    <property type="match status" value="1"/>
</dbReference>
<dbReference type="Pfam" id="PF01016">
    <property type="entry name" value="Ribosomal_L27"/>
    <property type="match status" value="1"/>
</dbReference>
<dbReference type="PRINTS" id="PR00063">
    <property type="entry name" value="RIBOSOMALL27"/>
</dbReference>
<dbReference type="SUPFAM" id="SSF110324">
    <property type="entry name" value="Ribosomal L27 protein-like"/>
    <property type="match status" value="1"/>
</dbReference>
<dbReference type="PROSITE" id="PS00831">
    <property type="entry name" value="RIBOSOMAL_L27"/>
    <property type="match status" value="1"/>
</dbReference>
<protein>
    <recommendedName>
        <fullName evidence="1">Large ribosomal subunit protein bL27</fullName>
    </recommendedName>
    <alternativeName>
        <fullName evidence="3">50S ribosomal protein L27</fullName>
    </alternativeName>
</protein>
<keyword id="KW-0687">Ribonucleoprotein</keyword>
<keyword id="KW-0689">Ribosomal protein</keyword>
<organism>
    <name type="scientific">Burkholderia lata (strain ATCC 17760 / DSM 23089 / LMG 22485 / NCIMB 9086 / R18194 / 383)</name>
    <dbReference type="NCBI Taxonomy" id="482957"/>
    <lineage>
        <taxon>Bacteria</taxon>
        <taxon>Pseudomonadati</taxon>
        <taxon>Pseudomonadota</taxon>
        <taxon>Betaproteobacteria</taxon>
        <taxon>Burkholderiales</taxon>
        <taxon>Burkholderiaceae</taxon>
        <taxon>Burkholderia</taxon>
        <taxon>Burkholderia cepacia complex</taxon>
    </lineage>
</organism>
<accession>Q39JU8</accession>
<reference key="1">
    <citation type="submission" date="2005-10" db="EMBL/GenBank/DDBJ databases">
        <title>Complete sequence of chromosome 1 of Burkholderia sp. 383.</title>
        <authorList>
            <consortium name="US DOE Joint Genome Institute"/>
            <person name="Copeland A."/>
            <person name="Lucas S."/>
            <person name="Lapidus A."/>
            <person name="Barry K."/>
            <person name="Detter J.C."/>
            <person name="Glavina T."/>
            <person name="Hammon N."/>
            <person name="Israni S."/>
            <person name="Pitluck S."/>
            <person name="Chain P."/>
            <person name="Malfatti S."/>
            <person name="Shin M."/>
            <person name="Vergez L."/>
            <person name="Schmutz J."/>
            <person name="Larimer F."/>
            <person name="Land M."/>
            <person name="Kyrpides N."/>
            <person name="Lykidis A."/>
            <person name="Richardson P."/>
        </authorList>
    </citation>
    <scope>NUCLEOTIDE SEQUENCE [LARGE SCALE GENOMIC DNA]</scope>
    <source>
        <strain>ATCC 17760 / DSM 23089 / LMG 22485 / NCIMB 9086 / R18194 / 383</strain>
    </source>
</reference>
<name>RL27_BURL3</name>
<comment type="similarity">
    <text evidence="1">Belongs to the bacterial ribosomal protein bL27 family.</text>
</comment>
<gene>
    <name evidence="1" type="primary">rpmA</name>
    <name type="ordered locus">Bcep18194_A3667</name>
</gene>
<proteinExistence type="inferred from homology"/>
<evidence type="ECO:0000255" key="1">
    <source>
        <dbReference type="HAMAP-Rule" id="MF_00539"/>
    </source>
</evidence>
<evidence type="ECO:0000256" key="2">
    <source>
        <dbReference type="SAM" id="MobiDB-lite"/>
    </source>
</evidence>
<evidence type="ECO:0000305" key="3"/>
<sequence length="87" mass="9089">MAHKKAGGSSRNGRDSESKRLGVKVYGGQAINAGGIIVRQRGTRMHAGENVGMGKDHTLFALVDGHVKFATKGADKKHLVIVVPAAA</sequence>
<feature type="chain" id="PRO_1000017435" description="Large ribosomal subunit protein bL27">
    <location>
        <begin position="1"/>
        <end position="87"/>
    </location>
</feature>
<feature type="region of interest" description="Disordered" evidence="2">
    <location>
        <begin position="1"/>
        <end position="21"/>
    </location>
</feature>